<keyword id="KW-0963">Cytoplasm</keyword>
<keyword id="KW-0311">Gluconate utilization</keyword>
<keyword id="KW-0521">NADP</keyword>
<keyword id="KW-0560">Oxidoreductase</keyword>
<keyword id="KW-0570">Pentose shunt</keyword>
<keyword id="KW-0576">Peroxisome</keyword>
<keyword id="KW-1185">Reference proteome</keyword>
<evidence type="ECO:0000250" key="1">
    <source>
        <dbReference type="UniProtKB" id="P96789"/>
    </source>
</evidence>
<evidence type="ECO:0000269" key="2">
    <source>
    </source>
</evidence>
<evidence type="ECO:0000269" key="3">
    <source>
    </source>
</evidence>
<evidence type="ECO:0000303" key="4">
    <source>
    </source>
</evidence>
<evidence type="ECO:0000305" key="5"/>
<evidence type="ECO:0000305" key="6">
    <source>
    </source>
</evidence>
<evidence type="ECO:0000312" key="7">
    <source>
        <dbReference type="Araport" id="AT3G02360"/>
    </source>
</evidence>
<evidence type="ECO:0000312" key="8">
    <source>
        <dbReference type="EMBL" id="AAG12595.1"/>
    </source>
</evidence>
<organism>
    <name type="scientific">Arabidopsis thaliana</name>
    <name type="common">Mouse-ear cress</name>
    <dbReference type="NCBI Taxonomy" id="3702"/>
    <lineage>
        <taxon>Eukaryota</taxon>
        <taxon>Viridiplantae</taxon>
        <taxon>Streptophyta</taxon>
        <taxon>Embryophyta</taxon>
        <taxon>Tracheophyta</taxon>
        <taxon>Spermatophyta</taxon>
        <taxon>Magnoliopsida</taxon>
        <taxon>eudicotyledons</taxon>
        <taxon>Gunneridae</taxon>
        <taxon>Pentapetalae</taxon>
        <taxon>rosids</taxon>
        <taxon>malvids</taxon>
        <taxon>Brassicales</taxon>
        <taxon>Brassicaceae</taxon>
        <taxon>Camelineae</taxon>
        <taxon>Arabidopsis</taxon>
    </lineage>
</organism>
<feature type="chain" id="PRO_0000421100" description="6-phosphogluconate dehydrogenase, decarboxylating 2">
    <location>
        <begin position="1"/>
        <end position="486"/>
    </location>
</feature>
<feature type="short sequence motif" description="Microbody targeting signal" evidence="6">
    <location>
        <begin position="484"/>
        <end position="486"/>
    </location>
</feature>
<feature type="active site" description="Proton acceptor" evidence="1">
    <location>
        <position position="188"/>
    </location>
</feature>
<feature type="active site" description="Proton donor" evidence="1">
    <location>
        <position position="195"/>
    </location>
</feature>
<feature type="binding site" evidence="1">
    <location>
        <begin position="12"/>
        <end position="17"/>
    </location>
    <ligand>
        <name>NADP(+)</name>
        <dbReference type="ChEBI" id="CHEBI:58349"/>
    </ligand>
</feature>
<feature type="binding site" evidence="1">
    <location>
        <begin position="35"/>
        <end position="37"/>
    </location>
    <ligand>
        <name>NADP(+)</name>
        <dbReference type="ChEBI" id="CHEBI:58349"/>
    </ligand>
</feature>
<feature type="binding site" evidence="1">
    <location>
        <begin position="79"/>
        <end position="81"/>
    </location>
    <ligand>
        <name>NADP(+)</name>
        <dbReference type="ChEBI" id="CHEBI:58349"/>
    </ligand>
</feature>
<feature type="binding site" evidence="1">
    <location>
        <position position="107"/>
    </location>
    <ligand>
        <name>NADP(+)</name>
        <dbReference type="ChEBI" id="CHEBI:58349"/>
    </ligand>
</feature>
<feature type="binding site" description="in other chain" evidence="1">
    <location>
        <position position="107"/>
    </location>
    <ligand>
        <name>substrate</name>
        <note>ligand shared between dimeric partners</note>
    </ligand>
</feature>
<feature type="binding site" description="in other chain" evidence="1">
    <location>
        <begin position="133"/>
        <end position="135"/>
    </location>
    <ligand>
        <name>substrate</name>
        <note>ligand shared between dimeric partners</note>
    </ligand>
</feature>
<feature type="binding site" description="in other chain" evidence="1">
    <location>
        <begin position="191"/>
        <end position="192"/>
    </location>
    <ligand>
        <name>substrate</name>
        <note>ligand shared between dimeric partners</note>
    </ligand>
</feature>
<feature type="binding site" description="in other chain" evidence="1">
    <location>
        <position position="196"/>
    </location>
    <ligand>
        <name>substrate</name>
        <note>ligand shared between dimeric partners</note>
    </ligand>
</feature>
<feature type="binding site" description="in other chain" evidence="1">
    <location>
        <position position="266"/>
    </location>
    <ligand>
        <name>substrate</name>
        <note>ligand shared between dimeric partners</note>
    </ligand>
</feature>
<feature type="binding site" description="in other chain" evidence="1">
    <location>
        <position position="293"/>
    </location>
    <ligand>
        <name>substrate</name>
        <note>ligand shared between dimeric partners</note>
    </ligand>
</feature>
<feature type="binding site" evidence="1">
    <location>
        <position position="456"/>
    </location>
    <ligand>
        <name>substrate</name>
        <note>ligand shared between dimeric partners</note>
    </ligand>
</feature>
<feature type="binding site" evidence="1">
    <location>
        <position position="462"/>
    </location>
    <ligand>
        <name>substrate</name>
        <note>ligand shared between dimeric partners</note>
    </ligand>
</feature>
<proteinExistence type="evidence at protein level"/>
<protein>
    <recommendedName>
        <fullName evidence="5">6-phosphogluconate dehydrogenase, decarboxylating 2</fullName>
        <ecNumber evidence="2">1.1.1.44</ecNumber>
    </recommendedName>
</protein>
<gene>
    <name evidence="4" type="primary">PGD2</name>
    <name evidence="7" type="ordered locus">At3g02360</name>
    <name evidence="8" type="ORF">F11A12.5</name>
</gene>
<reference key="1">
    <citation type="journal article" date="2000" name="Nature">
        <title>Sequence and analysis of chromosome 3 of the plant Arabidopsis thaliana.</title>
        <authorList>
            <person name="Salanoubat M."/>
            <person name="Lemcke K."/>
            <person name="Rieger M."/>
            <person name="Ansorge W."/>
            <person name="Unseld M."/>
            <person name="Fartmann B."/>
            <person name="Valle G."/>
            <person name="Bloecker H."/>
            <person name="Perez-Alonso M."/>
            <person name="Obermaier B."/>
            <person name="Delseny M."/>
            <person name="Boutry M."/>
            <person name="Grivell L.A."/>
            <person name="Mache R."/>
            <person name="Puigdomenech P."/>
            <person name="De Simone V."/>
            <person name="Choisne N."/>
            <person name="Artiguenave F."/>
            <person name="Robert C."/>
            <person name="Brottier P."/>
            <person name="Wincker P."/>
            <person name="Cattolico L."/>
            <person name="Weissenbach J."/>
            <person name="Saurin W."/>
            <person name="Quetier F."/>
            <person name="Schaefer M."/>
            <person name="Mueller-Auer S."/>
            <person name="Gabel C."/>
            <person name="Fuchs M."/>
            <person name="Benes V."/>
            <person name="Wurmbach E."/>
            <person name="Drzonek H."/>
            <person name="Erfle H."/>
            <person name="Jordan N."/>
            <person name="Bangert S."/>
            <person name="Wiedelmann R."/>
            <person name="Kranz H."/>
            <person name="Voss H."/>
            <person name="Holland R."/>
            <person name="Brandt P."/>
            <person name="Nyakatura G."/>
            <person name="Vezzi A."/>
            <person name="D'Angelo M."/>
            <person name="Pallavicini A."/>
            <person name="Toppo S."/>
            <person name="Simionati B."/>
            <person name="Conrad A."/>
            <person name="Hornischer K."/>
            <person name="Kauer G."/>
            <person name="Loehnert T.-H."/>
            <person name="Nordsiek G."/>
            <person name="Reichelt J."/>
            <person name="Scharfe M."/>
            <person name="Schoen O."/>
            <person name="Bargues M."/>
            <person name="Terol J."/>
            <person name="Climent J."/>
            <person name="Navarro P."/>
            <person name="Collado C."/>
            <person name="Perez-Perez A."/>
            <person name="Ottenwaelder B."/>
            <person name="Duchemin D."/>
            <person name="Cooke R."/>
            <person name="Laudie M."/>
            <person name="Berger-Llauro C."/>
            <person name="Purnelle B."/>
            <person name="Masuy D."/>
            <person name="de Haan M."/>
            <person name="Maarse A.C."/>
            <person name="Alcaraz J.-P."/>
            <person name="Cottet A."/>
            <person name="Casacuberta E."/>
            <person name="Monfort A."/>
            <person name="Argiriou A."/>
            <person name="Flores M."/>
            <person name="Liguori R."/>
            <person name="Vitale D."/>
            <person name="Mannhaupt G."/>
            <person name="Haase D."/>
            <person name="Schoof H."/>
            <person name="Rudd S."/>
            <person name="Zaccaria P."/>
            <person name="Mewes H.-W."/>
            <person name="Mayer K.F.X."/>
            <person name="Kaul S."/>
            <person name="Town C.D."/>
            <person name="Koo H.L."/>
            <person name="Tallon L.J."/>
            <person name="Jenkins J."/>
            <person name="Rooney T."/>
            <person name="Rizzo M."/>
            <person name="Walts A."/>
            <person name="Utterback T."/>
            <person name="Fujii C.Y."/>
            <person name="Shea T.P."/>
            <person name="Creasy T.H."/>
            <person name="Haas B."/>
            <person name="Maiti R."/>
            <person name="Wu D."/>
            <person name="Peterson J."/>
            <person name="Van Aken S."/>
            <person name="Pai G."/>
            <person name="Militscher J."/>
            <person name="Sellers P."/>
            <person name="Gill J.E."/>
            <person name="Feldblyum T.V."/>
            <person name="Preuss D."/>
            <person name="Lin X."/>
            <person name="Nierman W.C."/>
            <person name="Salzberg S.L."/>
            <person name="White O."/>
            <person name="Venter J.C."/>
            <person name="Fraser C.M."/>
            <person name="Kaneko T."/>
            <person name="Nakamura Y."/>
            <person name="Sato S."/>
            <person name="Kato T."/>
            <person name="Asamizu E."/>
            <person name="Sasamoto S."/>
            <person name="Kimura T."/>
            <person name="Idesawa K."/>
            <person name="Kawashima K."/>
            <person name="Kishida Y."/>
            <person name="Kiyokawa C."/>
            <person name="Kohara M."/>
            <person name="Matsumoto M."/>
            <person name="Matsuno A."/>
            <person name="Muraki A."/>
            <person name="Nakayama S."/>
            <person name="Nakazaki N."/>
            <person name="Shinpo S."/>
            <person name="Takeuchi C."/>
            <person name="Wada T."/>
            <person name="Watanabe A."/>
            <person name="Yamada M."/>
            <person name="Yasuda M."/>
            <person name="Tabata S."/>
        </authorList>
    </citation>
    <scope>NUCLEOTIDE SEQUENCE [LARGE SCALE GENOMIC DNA]</scope>
    <source>
        <strain>cv. Columbia</strain>
    </source>
</reference>
<reference key="2">
    <citation type="journal article" date="2017" name="Plant J.">
        <title>Araport11: a complete reannotation of the Arabidopsis thaliana reference genome.</title>
        <authorList>
            <person name="Cheng C.Y."/>
            <person name="Krishnakumar V."/>
            <person name="Chan A.P."/>
            <person name="Thibaud-Nissen F."/>
            <person name="Schobel S."/>
            <person name="Town C.D."/>
        </authorList>
    </citation>
    <scope>GENOME REANNOTATION</scope>
    <source>
        <strain>cv. Columbia</strain>
    </source>
</reference>
<reference key="3">
    <citation type="journal article" date="2003" name="Science">
        <title>Empirical analysis of transcriptional activity in the Arabidopsis genome.</title>
        <authorList>
            <person name="Yamada K."/>
            <person name="Lim J."/>
            <person name="Dale J.M."/>
            <person name="Chen H."/>
            <person name="Shinn P."/>
            <person name="Palm C.J."/>
            <person name="Southwick A.M."/>
            <person name="Wu H.C."/>
            <person name="Kim C.J."/>
            <person name="Nguyen M."/>
            <person name="Pham P.K."/>
            <person name="Cheuk R.F."/>
            <person name="Karlin-Newmann G."/>
            <person name="Liu S.X."/>
            <person name="Lam B."/>
            <person name="Sakano H."/>
            <person name="Wu T."/>
            <person name="Yu G."/>
            <person name="Miranda M."/>
            <person name="Quach H.L."/>
            <person name="Tripp M."/>
            <person name="Chang C.H."/>
            <person name="Lee J.M."/>
            <person name="Toriumi M.J."/>
            <person name="Chan M.M."/>
            <person name="Tang C.C."/>
            <person name="Onodera C.S."/>
            <person name="Deng J.M."/>
            <person name="Akiyama K."/>
            <person name="Ansari Y."/>
            <person name="Arakawa T."/>
            <person name="Banh J."/>
            <person name="Banno F."/>
            <person name="Bowser L."/>
            <person name="Brooks S.Y."/>
            <person name="Carninci P."/>
            <person name="Chao Q."/>
            <person name="Choy N."/>
            <person name="Enju A."/>
            <person name="Goldsmith A.D."/>
            <person name="Gurjal M."/>
            <person name="Hansen N.F."/>
            <person name="Hayashizaki Y."/>
            <person name="Johnson-Hopson C."/>
            <person name="Hsuan V.W."/>
            <person name="Iida K."/>
            <person name="Karnes M."/>
            <person name="Khan S."/>
            <person name="Koesema E."/>
            <person name="Ishida J."/>
            <person name="Jiang P.X."/>
            <person name="Jones T."/>
            <person name="Kawai J."/>
            <person name="Kamiya A."/>
            <person name="Meyers C."/>
            <person name="Nakajima M."/>
            <person name="Narusaka M."/>
            <person name="Seki M."/>
            <person name="Sakurai T."/>
            <person name="Satou M."/>
            <person name="Tamse R."/>
            <person name="Vaysberg M."/>
            <person name="Wallender E.K."/>
            <person name="Wong C."/>
            <person name="Yamamura Y."/>
            <person name="Yuan S."/>
            <person name="Shinozaki K."/>
            <person name="Davis R.W."/>
            <person name="Theologis A."/>
            <person name="Ecker J.R."/>
        </authorList>
    </citation>
    <scope>NUCLEOTIDE SEQUENCE [LARGE SCALE MRNA]</scope>
    <source>
        <strain>cv. Columbia</strain>
    </source>
</reference>
<reference key="4">
    <citation type="submission" date="2006-07" db="EMBL/GenBank/DDBJ databases">
        <title>Large-scale analysis of RIKEN Arabidopsis full-length (RAFL) cDNAs.</title>
        <authorList>
            <person name="Totoki Y."/>
            <person name="Seki M."/>
            <person name="Ishida J."/>
            <person name="Nakajima M."/>
            <person name="Enju A."/>
            <person name="Kamiya A."/>
            <person name="Narusaka M."/>
            <person name="Shin-i T."/>
            <person name="Nakagawa M."/>
            <person name="Sakamoto N."/>
            <person name="Oishi K."/>
            <person name="Kohara Y."/>
            <person name="Kobayashi M."/>
            <person name="Toyoda A."/>
            <person name="Sakaki Y."/>
            <person name="Sakurai T."/>
            <person name="Iida K."/>
            <person name="Akiyama K."/>
            <person name="Satou M."/>
            <person name="Toyoda T."/>
            <person name="Konagaya A."/>
            <person name="Carninci P."/>
            <person name="Kawai J."/>
            <person name="Hayashizaki Y."/>
            <person name="Shinozaki K."/>
        </authorList>
    </citation>
    <scope>NUCLEOTIDE SEQUENCE [LARGE SCALE MRNA]</scope>
    <source>
        <strain>cv. Columbia</strain>
    </source>
</reference>
<reference key="5">
    <citation type="submission" date="2002-03" db="EMBL/GenBank/DDBJ databases">
        <title>Full-length cDNA from Arabidopsis thaliana.</title>
        <authorList>
            <person name="Brover V.V."/>
            <person name="Troukhan M.E."/>
            <person name="Alexandrov N.A."/>
            <person name="Lu Y.-P."/>
            <person name="Flavell R.B."/>
            <person name="Feldmann K.A."/>
        </authorList>
    </citation>
    <scope>NUCLEOTIDE SEQUENCE [LARGE SCALE MRNA]</scope>
</reference>
<reference key="6">
    <citation type="journal article" date="2003" name="Curr. Opin. Plant Biol.">
        <title>The oxidative pentose phosphate pathway: structure and organisation.</title>
        <authorList>
            <person name="Kruger N.J."/>
            <person name="von Schaewen A."/>
        </authorList>
    </citation>
    <scope>REVIEW</scope>
</reference>
<reference key="7">
    <citation type="journal article" date="2007" name="BMC Genomics">
        <title>Sequence-indexed mutations in maize using the UniformMu transposon-tagging population.</title>
        <authorList>
            <person name="Settles A.M."/>
            <person name="Holding D.R."/>
            <person name="Tan B.C."/>
            <person name="Latshaw S.P."/>
            <person name="Liu J."/>
            <person name="Suzuki M."/>
            <person name="Li L."/>
            <person name="O'Brien B.A."/>
            <person name="Fajardo D.S."/>
            <person name="Wroclawska E."/>
            <person name="Tseung C.W."/>
            <person name="Lai J."/>
            <person name="Hunter C.T. III"/>
            <person name="Avigne W.T."/>
            <person name="Baier J."/>
            <person name="Messing J."/>
            <person name="Hannah L.C."/>
            <person name="Koch K.E."/>
            <person name="Becraft P.W."/>
            <person name="Larkins B.A."/>
            <person name="McCarty D.R."/>
        </authorList>
    </citation>
    <scope>GENE FAMILY</scope>
</reference>
<reference key="8">
    <citation type="journal article" date="2016" name="Plant Physiol.">
        <title>Defects in peroxisomal 6-phosphogluconate dehydrogenase isoform PGD2 prevent gametophytic interaction in Arabidopsis thaliana.</title>
        <authorList>
            <person name="Hoelscher C."/>
            <person name="Lutterbey M.C."/>
            <person name="Lansing H."/>
            <person name="Meyer T."/>
            <person name="Fischer K."/>
            <person name="von Schaewen A."/>
        </authorList>
    </citation>
    <scope>FUNCTION</scope>
    <scope>CATALYTIC ACTIVITY</scope>
    <scope>HOMODIMERIZATION</scope>
    <scope>SUBCELLULAR LOCATION</scope>
    <scope>DISRUPTION PHENOTYPE</scope>
</reference>
<reference key="9">
    <citation type="journal article" date="2016" name="Plant Signal. Behav.">
        <title>Analysis of homo- and hetero-dimerization among the three 6-phosphogluconate dehydrogenase isoforms of Arabidopsis.</title>
        <authorList>
            <person name="Lutterbey M.C."/>
            <person name="von Schaewen A."/>
        </authorList>
    </citation>
    <scope>HOMODIMERIZATION</scope>
    <scope>HETERODIMERIZATION</scope>
</reference>
<dbReference type="EC" id="1.1.1.44" evidence="2"/>
<dbReference type="EMBL" id="AC068900">
    <property type="protein sequence ID" value="AAG12595.1"/>
    <property type="molecule type" value="Genomic_DNA"/>
</dbReference>
<dbReference type="EMBL" id="CP002686">
    <property type="protein sequence ID" value="AEE73796.1"/>
    <property type="molecule type" value="Genomic_DNA"/>
</dbReference>
<dbReference type="EMBL" id="CP002686">
    <property type="protein sequence ID" value="AEE73797.1"/>
    <property type="molecule type" value="Genomic_DNA"/>
</dbReference>
<dbReference type="EMBL" id="AF424591">
    <property type="protein sequence ID" value="AAL11585.1"/>
    <property type="molecule type" value="mRNA"/>
</dbReference>
<dbReference type="EMBL" id="BT002299">
    <property type="protein sequence ID" value="AAN73296.1"/>
    <property type="molecule type" value="mRNA"/>
</dbReference>
<dbReference type="EMBL" id="AK227160">
    <property type="protein sequence ID" value="BAE99202.1"/>
    <property type="molecule type" value="mRNA"/>
</dbReference>
<dbReference type="EMBL" id="AY087341">
    <property type="protein sequence ID" value="AAM64891.1"/>
    <property type="molecule type" value="mRNA"/>
</dbReference>
<dbReference type="RefSeq" id="NP_186885.1">
    <property type="nucleotide sequence ID" value="NM_111103.6"/>
</dbReference>
<dbReference type="RefSeq" id="NP_850502.1">
    <property type="nucleotide sequence ID" value="NM_180171.2"/>
</dbReference>
<dbReference type="SMR" id="Q9FWA3"/>
<dbReference type="BioGRID" id="6496">
    <property type="interactions" value="20"/>
</dbReference>
<dbReference type="FunCoup" id="Q9FWA3">
    <property type="interactions" value="3301"/>
</dbReference>
<dbReference type="IntAct" id="Q9FWA3">
    <property type="interactions" value="1"/>
</dbReference>
<dbReference type="STRING" id="3702.Q9FWA3"/>
<dbReference type="iPTMnet" id="Q9FWA3"/>
<dbReference type="PaxDb" id="3702-AT3G02360.2"/>
<dbReference type="ProteomicsDB" id="245077"/>
<dbReference type="EnsemblPlants" id="AT3G02360.1">
    <property type="protein sequence ID" value="AT3G02360.1"/>
    <property type="gene ID" value="AT3G02360"/>
</dbReference>
<dbReference type="EnsemblPlants" id="AT3G02360.2">
    <property type="protein sequence ID" value="AT3G02360.2"/>
    <property type="gene ID" value="AT3G02360"/>
</dbReference>
<dbReference type="GeneID" id="821163"/>
<dbReference type="Gramene" id="AT3G02360.1">
    <property type="protein sequence ID" value="AT3G02360.1"/>
    <property type="gene ID" value="AT3G02360"/>
</dbReference>
<dbReference type="Gramene" id="AT3G02360.2">
    <property type="protein sequence ID" value="AT3G02360.2"/>
    <property type="gene ID" value="AT3G02360"/>
</dbReference>
<dbReference type="KEGG" id="ath:AT3G02360"/>
<dbReference type="Araport" id="AT3G02360"/>
<dbReference type="TAIR" id="AT3G02360">
    <property type="gene designation" value="PGD2"/>
</dbReference>
<dbReference type="eggNOG" id="KOG2653">
    <property type="taxonomic scope" value="Eukaryota"/>
</dbReference>
<dbReference type="HOGENOM" id="CLU_024540_4_2_1"/>
<dbReference type="InParanoid" id="Q9FWA3"/>
<dbReference type="OMA" id="CVTHVGP"/>
<dbReference type="OrthoDB" id="434986at2759"/>
<dbReference type="PhylomeDB" id="Q9FWA3"/>
<dbReference type="BRENDA" id="1.1.1.44">
    <property type="organism ID" value="399"/>
</dbReference>
<dbReference type="UniPathway" id="UPA00115">
    <property type="reaction ID" value="UER00410"/>
</dbReference>
<dbReference type="CD-CODE" id="4299E36E">
    <property type="entry name" value="Nucleolus"/>
</dbReference>
<dbReference type="PRO" id="PR:Q9FWA3"/>
<dbReference type="Proteomes" id="UP000006548">
    <property type="component" value="Chromosome 3"/>
</dbReference>
<dbReference type="ExpressionAtlas" id="Q9FWA3">
    <property type="expression patterns" value="baseline and differential"/>
</dbReference>
<dbReference type="GO" id="GO:0009570">
    <property type="term" value="C:chloroplast stroma"/>
    <property type="evidence" value="ECO:0007005"/>
    <property type="project" value="TAIR"/>
</dbReference>
<dbReference type="GO" id="GO:0005829">
    <property type="term" value="C:cytosol"/>
    <property type="evidence" value="ECO:0000314"/>
    <property type="project" value="TAIR"/>
</dbReference>
<dbReference type="GO" id="GO:0005777">
    <property type="term" value="C:peroxisome"/>
    <property type="evidence" value="ECO:0000314"/>
    <property type="project" value="TAIR"/>
</dbReference>
<dbReference type="GO" id="GO:0099503">
    <property type="term" value="C:secretory vesicle"/>
    <property type="evidence" value="ECO:0007005"/>
    <property type="project" value="TAIR"/>
</dbReference>
<dbReference type="GO" id="GO:0050661">
    <property type="term" value="F:NADP binding"/>
    <property type="evidence" value="ECO:0007669"/>
    <property type="project" value="InterPro"/>
</dbReference>
<dbReference type="GO" id="GO:0004616">
    <property type="term" value="F:phosphogluconate dehydrogenase (decarboxylating) activity"/>
    <property type="evidence" value="ECO:0000314"/>
    <property type="project" value="TAIR"/>
</dbReference>
<dbReference type="GO" id="GO:0019521">
    <property type="term" value="P:D-gluconate metabolic process"/>
    <property type="evidence" value="ECO:0007669"/>
    <property type="project" value="UniProtKB-KW"/>
</dbReference>
<dbReference type="GO" id="GO:0080173">
    <property type="term" value="P:male-female gamete recognition during double fertilization forming a zygote and endosperm"/>
    <property type="evidence" value="ECO:0000315"/>
    <property type="project" value="TAIR"/>
</dbReference>
<dbReference type="GO" id="GO:0006098">
    <property type="term" value="P:pentose-phosphate shunt"/>
    <property type="evidence" value="ECO:0007669"/>
    <property type="project" value="UniProtKB-UniPathway"/>
</dbReference>
<dbReference type="FunFam" id="1.10.1040.10:FF:000002">
    <property type="entry name" value="6-phosphogluconate dehydrogenase, decarboxylating"/>
    <property type="match status" value="1"/>
</dbReference>
<dbReference type="FunFam" id="1.20.5.320:FF:000001">
    <property type="entry name" value="6-phosphogluconate dehydrogenase, decarboxylating"/>
    <property type="match status" value="1"/>
</dbReference>
<dbReference type="FunFam" id="3.40.50.720:FF:000007">
    <property type="entry name" value="6-phosphogluconate dehydrogenase, decarboxylating"/>
    <property type="match status" value="1"/>
</dbReference>
<dbReference type="Gene3D" id="1.20.5.320">
    <property type="entry name" value="6-Phosphogluconate Dehydrogenase, domain 3"/>
    <property type="match status" value="1"/>
</dbReference>
<dbReference type="Gene3D" id="1.10.1040.10">
    <property type="entry name" value="N-(1-d-carboxylethyl)-l-norvaline Dehydrogenase, domain 2"/>
    <property type="match status" value="1"/>
</dbReference>
<dbReference type="Gene3D" id="3.40.50.720">
    <property type="entry name" value="NAD(P)-binding Rossmann-like Domain"/>
    <property type="match status" value="1"/>
</dbReference>
<dbReference type="InterPro" id="IPR008927">
    <property type="entry name" value="6-PGluconate_DH-like_C_sf"/>
</dbReference>
<dbReference type="InterPro" id="IPR013328">
    <property type="entry name" value="6PGD_dom2"/>
</dbReference>
<dbReference type="InterPro" id="IPR006114">
    <property type="entry name" value="6PGDH_C"/>
</dbReference>
<dbReference type="InterPro" id="IPR006113">
    <property type="entry name" value="6PGDH_Gnd/GntZ"/>
</dbReference>
<dbReference type="InterPro" id="IPR006115">
    <property type="entry name" value="6PGDH_NADP-bd"/>
</dbReference>
<dbReference type="InterPro" id="IPR036291">
    <property type="entry name" value="NAD(P)-bd_dom_sf"/>
</dbReference>
<dbReference type="InterPro" id="IPR006183">
    <property type="entry name" value="Pgluconate_DH"/>
</dbReference>
<dbReference type="NCBIfam" id="TIGR00873">
    <property type="entry name" value="gnd"/>
    <property type="match status" value="1"/>
</dbReference>
<dbReference type="NCBIfam" id="NF006765">
    <property type="entry name" value="PRK09287.1"/>
    <property type="match status" value="1"/>
</dbReference>
<dbReference type="PANTHER" id="PTHR11811">
    <property type="entry name" value="6-PHOSPHOGLUCONATE DEHYDROGENASE"/>
    <property type="match status" value="1"/>
</dbReference>
<dbReference type="Pfam" id="PF00393">
    <property type="entry name" value="6PGD"/>
    <property type="match status" value="1"/>
</dbReference>
<dbReference type="Pfam" id="PF03446">
    <property type="entry name" value="NAD_binding_2"/>
    <property type="match status" value="1"/>
</dbReference>
<dbReference type="PIRSF" id="PIRSF000109">
    <property type="entry name" value="6PGD"/>
    <property type="match status" value="1"/>
</dbReference>
<dbReference type="PRINTS" id="PR00076">
    <property type="entry name" value="6PGDHDRGNASE"/>
</dbReference>
<dbReference type="SMART" id="SM01350">
    <property type="entry name" value="6PGD"/>
    <property type="match status" value="1"/>
</dbReference>
<dbReference type="SUPFAM" id="SSF48179">
    <property type="entry name" value="6-phosphogluconate dehydrogenase C-terminal domain-like"/>
    <property type="match status" value="1"/>
</dbReference>
<dbReference type="SUPFAM" id="SSF51735">
    <property type="entry name" value="NAD(P)-binding Rossmann-fold domains"/>
    <property type="match status" value="1"/>
</dbReference>
<name>6PGD2_ARATH</name>
<comment type="function">
    <text evidence="2">Catalyzes the oxidative decarboxylation of 6-phosphogluconate to ribulose 5-phosphate and CO(2), with concomitant reduction of NADP to NADPH (PubMed:26941195). Required for guided growth of the male gametophytes and interaction between the pollen tube and the ovule (PubMed:26941195).</text>
</comment>
<comment type="catalytic activity">
    <reaction evidence="2">
        <text>6-phospho-D-gluconate + NADP(+) = D-ribulose 5-phosphate + CO2 + NADPH</text>
        <dbReference type="Rhea" id="RHEA:10116"/>
        <dbReference type="ChEBI" id="CHEBI:16526"/>
        <dbReference type="ChEBI" id="CHEBI:57783"/>
        <dbReference type="ChEBI" id="CHEBI:58121"/>
        <dbReference type="ChEBI" id="CHEBI:58349"/>
        <dbReference type="ChEBI" id="CHEBI:58759"/>
        <dbReference type="EC" id="1.1.1.44"/>
    </reaction>
</comment>
<comment type="pathway">
    <text evidence="5">Carbohydrate degradation; pentose phosphate pathway; D-ribulose 5-phosphate from D-glucose 6-phosphate (oxidative stage): step 3/3.</text>
</comment>
<comment type="subunit">
    <text evidence="2 3">Forms homodimer (PubMed:26941195, PubMed:27366940). Forms heterodimers with PGD1 or PGD3 (PubMed:27366940).</text>
</comment>
<comment type="subcellular location">
    <subcellularLocation>
        <location evidence="2">Cytoplasm</location>
        <location evidence="2">Cytosol</location>
    </subcellularLocation>
    <subcellularLocation>
        <location evidence="2">Peroxisome</location>
    </subcellularLocation>
</comment>
<comment type="disruption phenotype">
    <text evidence="2">Embryonic lethality when homozygous (PubMed:26941195). Defects in pollen tube growth (PubMed:26941195).</text>
</comment>
<comment type="similarity">
    <text evidence="5">Belongs to the 6-phosphogluconate dehydrogenase family.</text>
</comment>
<accession>Q9FWA3</accession>
<sequence length="486" mass="53577">MAVQPTRIGLAGLAVMGQNLALNIAEKGFPISVYNRTTSKVDETVERAKKEGNLPLYGFHDPESFVKSIQKPRVIIMLVKAGSPVDQTIKTLSAYLEKGDCIVDGGNEWYENTERREKAVAENGFLYLGMGVSGGEEGARNGPSMMPGGSYEAYKNIEDIVLKVAAQVRDSGPCVTYIGKGGSGNFVKMVHNGIEYGDMQLIAEAYDVLKSVGKLSNEELHSVFSDWNKGELESFLVEITADIFGIKDDKGDGHLVDKVLDKTGMKGTGKWTVQQAAELSVPAPTIESSLDARFLSGLKDERVQAAKVFKAGGFGDILTDQKVDKKQLVDDVRKALYASKICSYAQGMNLIRAKSIEKGWGLKLGELARIWKGGCIIRAIFLDRIKQAYDRNAELANLLVDPEFAKEIIERQSAWRRVVCLAINSGISTPGMSASLAYFDSYRRERLPANLVQAQRDYFGAHTYERTDVEGSFHTEWFKIARQSKI</sequence>